<evidence type="ECO:0000255" key="1">
    <source>
        <dbReference type="HAMAP-Rule" id="MF_00272"/>
    </source>
</evidence>
<evidence type="ECO:0000255" key="2">
    <source>
        <dbReference type="PROSITE-ProRule" id="PRU01066"/>
    </source>
</evidence>
<comment type="function">
    <text evidence="1">The glycine cleavage system catalyzes the degradation of glycine. The H protein shuttles the methylamine group of glycine from the P protein to the T protein.</text>
</comment>
<comment type="cofactor">
    <cofactor evidence="1">
        <name>(R)-lipoate</name>
        <dbReference type="ChEBI" id="CHEBI:83088"/>
    </cofactor>
    <text evidence="1">Binds 1 lipoyl cofactor covalently.</text>
</comment>
<comment type="subunit">
    <text evidence="1">The glycine cleavage system is composed of four proteins: P, T, L and H.</text>
</comment>
<comment type="similarity">
    <text evidence="1">Belongs to the GcvH family.</text>
</comment>
<proteinExistence type="inferred from homology"/>
<feature type="chain" id="PRO_0000427186" description="Glycine cleavage system H protein">
    <location>
        <begin position="1"/>
        <end position="134"/>
    </location>
</feature>
<feature type="domain" description="Lipoyl-binding" evidence="2">
    <location>
        <begin position="24"/>
        <end position="106"/>
    </location>
</feature>
<feature type="modified residue" description="N6-lipoyllysine" evidence="1">
    <location>
        <position position="65"/>
    </location>
</feature>
<gene>
    <name evidence="1" type="primary">gcvH</name>
    <name type="ordered locus">MT1874</name>
</gene>
<reference key="1">
    <citation type="journal article" date="2002" name="J. Bacteriol.">
        <title>Whole-genome comparison of Mycobacterium tuberculosis clinical and laboratory strains.</title>
        <authorList>
            <person name="Fleischmann R.D."/>
            <person name="Alland D."/>
            <person name="Eisen J.A."/>
            <person name="Carpenter L."/>
            <person name="White O."/>
            <person name="Peterson J.D."/>
            <person name="DeBoy R.T."/>
            <person name="Dodson R.J."/>
            <person name="Gwinn M.L."/>
            <person name="Haft D.H."/>
            <person name="Hickey E.K."/>
            <person name="Kolonay J.F."/>
            <person name="Nelson W.C."/>
            <person name="Umayam L.A."/>
            <person name="Ermolaeva M.D."/>
            <person name="Salzberg S.L."/>
            <person name="Delcher A."/>
            <person name="Utterback T.R."/>
            <person name="Weidman J.F."/>
            <person name="Khouri H.M."/>
            <person name="Gill J."/>
            <person name="Mikula A."/>
            <person name="Bishai W."/>
            <person name="Jacobs W.R. Jr."/>
            <person name="Venter J.C."/>
            <person name="Fraser C.M."/>
        </authorList>
    </citation>
    <scope>NUCLEOTIDE SEQUENCE [LARGE SCALE GENOMIC DNA]</scope>
    <source>
        <strain>CDC 1551 / Oshkosh</strain>
    </source>
</reference>
<dbReference type="EMBL" id="AE000516">
    <property type="protein sequence ID" value="AAK46147.1"/>
    <property type="molecule type" value="Genomic_DNA"/>
</dbReference>
<dbReference type="PIR" id="C70721">
    <property type="entry name" value="C70721"/>
</dbReference>
<dbReference type="RefSeq" id="WP_003899040.1">
    <property type="nucleotide sequence ID" value="NZ_KK341227.1"/>
</dbReference>
<dbReference type="SMR" id="P9WN54"/>
<dbReference type="KEGG" id="mtc:MT1874"/>
<dbReference type="PATRIC" id="fig|83331.31.peg.2018"/>
<dbReference type="HOGENOM" id="CLU_097408_2_2_11"/>
<dbReference type="Proteomes" id="UP000001020">
    <property type="component" value="Chromosome"/>
</dbReference>
<dbReference type="GO" id="GO:0005829">
    <property type="term" value="C:cytosol"/>
    <property type="evidence" value="ECO:0007669"/>
    <property type="project" value="TreeGrafter"/>
</dbReference>
<dbReference type="GO" id="GO:0005960">
    <property type="term" value="C:glycine cleavage complex"/>
    <property type="evidence" value="ECO:0007669"/>
    <property type="project" value="InterPro"/>
</dbReference>
<dbReference type="GO" id="GO:0019464">
    <property type="term" value="P:glycine decarboxylation via glycine cleavage system"/>
    <property type="evidence" value="ECO:0007669"/>
    <property type="project" value="UniProtKB-UniRule"/>
</dbReference>
<dbReference type="CDD" id="cd06848">
    <property type="entry name" value="GCS_H"/>
    <property type="match status" value="1"/>
</dbReference>
<dbReference type="Gene3D" id="2.40.50.100">
    <property type="match status" value="1"/>
</dbReference>
<dbReference type="HAMAP" id="MF_00272">
    <property type="entry name" value="GcvH"/>
    <property type="match status" value="1"/>
</dbReference>
<dbReference type="InterPro" id="IPR003016">
    <property type="entry name" value="2-oxoA_DH_lipoyl-BS"/>
</dbReference>
<dbReference type="InterPro" id="IPR000089">
    <property type="entry name" value="Biotin_lipoyl"/>
</dbReference>
<dbReference type="InterPro" id="IPR002930">
    <property type="entry name" value="GCV_H"/>
</dbReference>
<dbReference type="InterPro" id="IPR033753">
    <property type="entry name" value="GCV_H/Fam206"/>
</dbReference>
<dbReference type="InterPro" id="IPR017453">
    <property type="entry name" value="GCV_H_sub"/>
</dbReference>
<dbReference type="InterPro" id="IPR011053">
    <property type="entry name" value="Single_hybrid_motif"/>
</dbReference>
<dbReference type="NCBIfam" id="TIGR00527">
    <property type="entry name" value="gcvH"/>
    <property type="match status" value="1"/>
</dbReference>
<dbReference type="NCBIfam" id="NF002270">
    <property type="entry name" value="PRK01202.1"/>
    <property type="match status" value="1"/>
</dbReference>
<dbReference type="PANTHER" id="PTHR11715">
    <property type="entry name" value="GLYCINE CLEAVAGE SYSTEM H PROTEIN"/>
    <property type="match status" value="1"/>
</dbReference>
<dbReference type="PANTHER" id="PTHR11715:SF3">
    <property type="entry name" value="GLYCINE CLEAVAGE SYSTEM H PROTEIN-RELATED"/>
    <property type="match status" value="1"/>
</dbReference>
<dbReference type="Pfam" id="PF01597">
    <property type="entry name" value="GCV_H"/>
    <property type="match status" value="1"/>
</dbReference>
<dbReference type="SUPFAM" id="SSF51230">
    <property type="entry name" value="Single hybrid motif"/>
    <property type="match status" value="1"/>
</dbReference>
<dbReference type="PROSITE" id="PS50968">
    <property type="entry name" value="BIOTINYL_LIPOYL"/>
    <property type="match status" value="1"/>
</dbReference>
<dbReference type="PROSITE" id="PS00189">
    <property type="entry name" value="LIPOYL"/>
    <property type="match status" value="1"/>
</dbReference>
<protein>
    <recommendedName>
        <fullName evidence="1">Glycine cleavage system H protein</fullName>
    </recommendedName>
</protein>
<accession>P9WN54</accession>
<accession>L0T7T4</accession>
<accession>Q50607</accession>
<name>GCSH_MYCTO</name>
<sequence>MSDIPSDLHYTAEHEWIRRSGDDTVRVGITDYAQSALGDVVFVQLPVIGTAVTAGETFGEVESTKSVSDLYAPISGKVSEVNSDLDGTPQLVNSDPYGAGWLLDIQVDSSDVAALESALTTLLDAEAYRGTLTE</sequence>
<organism>
    <name type="scientific">Mycobacterium tuberculosis (strain CDC 1551 / Oshkosh)</name>
    <dbReference type="NCBI Taxonomy" id="83331"/>
    <lineage>
        <taxon>Bacteria</taxon>
        <taxon>Bacillati</taxon>
        <taxon>Actinomycetota</taxon>
        <taxon>Actinomycetes</taxon>
        <taxon>Mycobacteriales</taxon>
        <taxon>Mycobacteriaceae</taxon>
        <taxon>Mycobacterium</taxon>
        <taxon>Mycobacterium tuberculosis complex</taxon>
    </lineage>
</organism>
<keyword id="KW-0450">Lipoyl</keyword>
<keyword id="KW-1185">Reference proteome</keyword>